<dbReference type="PIR" id="B28186">
    <property type="entry name" value="B28186"/>
</dbReference>
<dbReference type="SMR" id="P26247"/>
<dbReference type="GO" id="GO:0005506">
    <property type="term" value="F:iron ion binding"/>
    <property type="evidence" value="ECO:0007669"/>
    <property type="project" value="InterPro"/>
</dbReference>
<dbReference type="GO" id="GO:0051536">
    <property type="term" value="F:iron-sulfur cluster binding"/>
    <property type="evidence" value="ECO:0007669"/>
    <property type="project" value="InterPro"/>
</dbReference>
<dbReference type="GO" id="GO:0016226">
    <property type="term" value="P:iron-sulfur cluster assembly"/>
    <property type="evidence" value="ECO:0007669"/>
    <property type="project" value="InterPro"/>
</dbReference>
<dbReference type="GO" id="GO:0009399">
    <property type="term" value="P:nitrogen fixation"/>
    <property type="evidence" value="ECO:0007669"/>
    <property type="project" value="UniProtKB-KW"/>
</dbReference>
<dbReference type="Gene3D" id="3.90.1010.10">
    <property type="match status" value="1"/>
</dbReference>
<dbReference type="InterPro" id="IPR002871">
    <property type="entry name" value="NIF_FeS_clus_asmbl_NifU_N"/>
</dbReference>
<dbReference type="Pfam" id="PF01592">
    <property type="entry name" value="NifU_N"/>
    <property type="match status" value="1"/>
</dbReference>
<dbReference type="SUPFAM" id="SSF82649">
    <property type="entry name" value="SufE/NifU"/>
    <property type="match status" value="1"/>
</dbReference>
<feature type="chain" id="PRO_0000166174" description="Nitrogen fixation protein NifU">
    <location>
        <begin position="1" status="less than"/>
        <end position="75" status="greater than"/>
    </location>
</feature>
<feature type="non-terminal residue">
    <location>
        <position position="1"/>
    </location>
</feature>
<feature type="non-terminal residue">
    <location>
        <position position="75"/>
    </location>
</feature>
<gene>
    <name type="primary">nifU</name>
</gene>
<proteinExistence type="inferred from homology"/>
<sequence>ALKVSMKDIADYLGGLPEAKMHCSVMGQEALEAAIYWYRGIPLATHDDDDEGALVCSCFGISESKIRRVILESSH</sequence>
<keyword id="KW-0535">Nitrogen fixation</keyword>
<accession>P26247</accession>
<reference key="1">
    <citation type="journal article" date="1988" name="J. Bacteriol.">
        <title>Cloning of nifHD from Nostoc commune UTEX 584 and of a flanking region homologous to part of the Azotobacter vinelandii nifU gene.</title>
        <authorList>
            <person name="Defrancesco N."/>
            <person name="Potts M."/>
        </authorList>
    </citation>
    <scope>NUCLEOTIDE SEQUENCE [GENOMIC DNA]</scope>
    <source>
        <strain>UTEX 584 / SAG 1453-5</strain>
    </source>
</reference>
<name>NIFU_NOSCO</name>
<protein>
    <recommendedName>
        <fullName>Nitrogen fixation protein NifU</fullName>
    </recommendedName>
</protein>
<organism>
    <name type="scientific">Nostoc commune</name>
    <dbReference type="NCBI Taxonomy" id="1178"/>
    <lineage>
        <taxon>Bacteria</taxon>
        <taxon>Bacillati</taxon>
        <taxon>Cyanobacteriota</taxon>
        <taxon>Cyanophyceae</taxon>
        <taxon>Nostocales</taxon>
        <taxon>Nostocaceae</taxon>
        <taxon>Nostoc</taxon>
    </lineage>
</organism>
<evidence type="ECO:0000305" key="1"/>
<comment type="function">
    <text evidence="1">May be involved in the formation or repair of [Fe-S] clusters present in iron-sulfur proteins.</text>
</comment>
<comment type="similarity">
    <text evidence="1">Belongs to the NifU family.</text>
</comment>